<protein>
    <recommendedName>
        <fullName evidence="1">3-isopropylmalate dehydratase large subunit</fullName>
        <ecNumber evidence="1">4.2.1.33</ecNumber>
    </recommendedName>
    <alternativeName>
        <fullName evidence="1">Alpha-IPM isomerase</fullName>
        <shortName evidence="1">IPMI</shortName>
    </alternativeName>
    <alternativeName>
        <fullName evidence="1">Isopropylmalate isomerase</fullName>
    </alternativeName>
</protein>
<reference key="1">
    <citation type="journal article" date="2007" name="Appl. Environ. Microbiol.">
        <title>Genome sequence of the cellulolytic gliding bacterium Cytophaga hutchinsonii.</title>
        <authorList>
            <person name="Xie G."/>
            <person name="Bruce D.C."/>
            <person name="Challacombe J.F."/>
            <person name="Chertkov O."/>
            <person name="Detter J.C."/>
            <person name="Gilna P."/>
            <person name="Han C.S."/>
            <person name="Lucas S."/>
            <person name="Misra M."/>
            <person name="Myers G.L."/>
            <person name="Richardson P."/>
            <person name="Tapia R."/>
            <person name="Thayer N."/>
            <person name="Thompson L.S."/>
            <person name="Brettin T.S."/>
            <person name="Henrissat B."/>
            <person name="Wilson D.B."/>
            <person name="McBride M.J."/>
        </authorList>
    </citation>
    <scope>NUCLEOTIDE SEQUENCE [LARGE SCALE GENOMIC DNA]</scope>
    <source>
        <strain>ATCC 33406 / DSM 1761 / JCM 20678 / CIP 103989 / IAM 12607 / NBRC 15051 / NCIMB 9469 / D465</strain>
    </source>
</reference>
<accession>Q11NN8</accession>
<keyword id="KW-0004">4Fe-4S</keyword>
<keyword id="KW-0028">Amino-acid biosynthesis</keyword>
<keyword id="KW-0100">Branched-chain amino acid biosynthesis</keyword>
<keyword id="KW-0408">Iron</keyword>
<keyword id="KW-0411">Iron-sulfur</keyword>
<keyword id="KW-0432">Leucine biosynthesis</keyword>
<keyword id="KW-0456">Lyase</keyword>
<keyword id="KW-0479">Metal-binding</keyword>
<keyword id="KW-1185">Reference proteome</keyword>
<comment type="function">
    <text evidence="1">Catalyzes the isomerization between 2-isopropylmalate and 3-isopropylmalate, via the formation of 2-isopropylmaleate.</text>
</comment>
<comment type="catalytic activity">
    <reaction evidence="1">
        <text>(2R,3S)-3-isopropylmalate = (2S)-2-isopropylmalate</text>
        <dbReference type="Rhea" id="RHEA:32287"/>
        <dbReference type="ChEBI" id="CHEBI:1178"/>
        <dbReference type="ChEBI" id="CHEBI:35121"/>
        <dbReference type="EC" id="4.2.1.33"/>
    </reaction>
</comment>
<comment type="cofactor">
    <cofactor evidence="1">
        <name>[4Fe-4S] cluster</name>
        <dbReference type="ChEBI" id="CHEBI:49883"/>
    </cofactor>
    <text evidence="1">Binds 1 [4Fe-4S] cluster per subunit.</text>
</comment>
<comment type="pathway">
    <text evidence="1">Amino-acid biosynthesis; L-leucine biosynthesis; L-leucine from 3-methyl-2-oxobutanoate: step 2/4.</text>
</comment>
<comment type="subunit">
    <text evidence="1">Heterodimer of LeuC and LeuD.</text>
</comment>
<comment type="similarity">
    <text evidence="1">Belongs to the aconitase/IPM isomerase family. LeuC type 1 subfamily.</text>
</comment>
<gene>
    <name evidence="1" type="primary">leuC</name>
    <name type="ordered locus">CHU_3742</name>
</gene>
<dbReference type="EC" id="4.2.1.33" evidence="1"/>
<dbReference type="EMBL" id="CP000383">
    <property type="protein sequence ID" value="ABG60975.1"/>
    <property type="molecule type" value="Genomic_DNA"/>
</dbReference>
<dbReference type="RefSeq" id="WP_011587080.1">
    <property type="nucleotide sequence ID" value="NC_008255.1"/>
</dbReference>
<dbReference type="SMR" id="Q11NN8"/>
<dbReference type="STRING" id="269798.CHU_3742"/>
<dbReference type="DNASU" id="4185123"/>
<dbReference type="KEGG" id="chu:CHU_3742"/>
<dbReference type="eggNOG" id="COG0065">
    <property type="taxonomic scope" value="Bacteria"/>
</dbReference>
<dbReference type="HOGENOM" id="CLU_006714_3_4_10"/>
<dbReference type="OrthoDB" id="9802769at2"/>
<dbReference type="UniPathway" id="UPA00048">
    <property type="reaction ID" value="UER00071"/>
</dbReference>
<dbReference type="Proteomes" id="UP000001822">
    <property type="component" value="Chromosome"/>
</dbReference>
<dbReference type="GO" id="GO:0003861">
    <property type="term" value="F:3-isopropylmalate dehydratase activity"/>
    <property type="evidence" value="ECO:0007669"/>
    <property type="project" value="UniProtKB-UniRule"/>
</dbReference>
<dbReference type="GO" id="GO:0051539">
    <property type="term" value="F:4 iron, 4 sulfur cluster binding"/>
    <property type="evidence" value="ECO:0007669"/>
    <property type="project" value="UniProtKB-KW"/>
</dbReference>
<dbReference type="GO" id="GO:0046872">
    <property type="term" value="F:metal ion binding"/>
    <property type="evidence" value="ECO:0007669"/>
    <property type="project" value="UniProtKB-KW"/>
</dbReference>
<dbReference type="GO" id="GO:0009098">
    <property type="term" value="P:L-leucine biosynthetic process"/>
    <property type="evidence" value="ECO:0007669"/>
    <property type="project" value="UniProtKB-UniRule"/>
</dbReference>
<dbReference type="CDD" id="cd01583">
    <property type="entry name" value="IPMI"/>
    <property type="match status" value="1"/>
</dbReference>
<dbReference type="Gene3D" id="3.30.499.10">
    <property type="entry name" value="Aconitase, domain 3"/>
    <property type="match status" value="2"/>
</dbReference>
<dbReference type="HAMAP" id="MF_01026">
    <property type="entry name" value="LeuC_type1"/>
    <property type="match status" value="1"/>
</dbReference>
<dbReference type="InterPro" id="IPR004430">
    <property type="entry name" value="3-IsopropMal_deHydase_lsu"/>
</dbReference>
<dbReference type="InterPro" id="IPR015931">
    <property type="entry name" value="Acnase/IPM_dHydase_lsu_aba_1/3"/>
</dbReference>
<dbReference type="InterPro" id="IPR001030">
    <property type="entry name" value="Acoase/IPM_deHydtase_lsu_aba"/>
</dbReference>
<dbReference type="InterPro" id="IPR018136">
    <property type="entry name" value="Aconitase_4Fe-4S_BS"/>
</dbReference>
<dbReference type="InterPro" id="IPR036008">
    <property type="entry name" value="Aconitase_4Fe-4S_dom"/>
</dbReference>
<dbReference type="InterPro" id="IPR050067">
    <property type="entry name" value="IPM_dehydratase_rel_enz"/>
</dbReference>
<dbReference type="InterPro" id="IPR033941">
    <property type="entry name" value="IPMI_cat"/>
</dbReference>
<dbReference type="NCBIfam" id="TIGR00170">
    <property type="entry name" value="leuC"/>
    <property type="match status" value="1"/>
</dbReference>
<dbReference type="NCBIfam" id="NF004016">
    <property type="entry name" value="PRK05478.1"/>
    <property type="match status" value="1"/>
</dbReference>
<dbReference type="NCBIfam" id="NF009116">
    <property type="entry name" value="PRK12466.1"/>
    <property type="match status" value="1"/>
</dbReference>
<dbReference type="PANTHER" id="PTHR43822:SF9">
    <property type="entry name" value="3-ISOPROPYLMALATE DEHYDRATASE"/>
    <property type="match status" value="1"/>
</dbReference>
<dbReference type="PANTHER" id="PTHR43822">
    <property type="entry name" value="HOMOACONITASE, MITOCHONDRIAL-RELATED"/>
    <property type="match status" value="1"/>
</dbReference>
<dbReference type="Pfam" id="PF00330">
    <property type="entry name" value="Aconitase"/>
    <property type="match status" value="1"/>
</dbReference>
<dbReference type="PRINTS" id="PR00415">
    <property type="entry name" value="ACONITASE"/>
</dbReference>
<dbReference type="SUPFAM" id="SSF53732">
    <property type="entry name" value="Aconitase iron-sulfur domain"/>
    <property type="match status" value="1"/>
</dbReference>
<dbReference type="PROSITE" id="PS00450">
    <property type="entry name" value="ACONITASE_1"/>
    <property type="match status" value="1"/>
</dbReference>
<dbReference type="PROSITE" id="PS01244">
    <property type="entry name" value="ACONITASE_2"/>
    <property type="match status" value="1"/>
</dbReference>
<proteinExistence type="inferred from homology"/>
<evidence type="ECO:0000255" key="1">
    <source>
        <dbReference type="HAMAP-Rule" id="MF_01026"/>
    </source>
</evidence>
<organism>
    <name type="scientific">Cytophaga hutchinsonii (strain ATCC 33406 / DSM 1761 / CIP 103989 / NBRC 15051 / NCIMB 9469 / D465)</name>
    <dbReference type="NCBI Taxonomy" id="269798"/>
    <lineage>
        <taxon>Bacteria</taxon>
        <taxon>Pseudomonadati</taxon>
        <taxon>Bacteroidota</taxon>
        <taxon>Cytophagia</taxon>
        <taxon>Cytophagales</taxon>
        <taxon>Cytophagaceae</taxon>
        <taxon>Cytophaga</taxon>
    </lineage>
</organism>
<sequence>MGKTLFEKVWNAHVVTEVKDGPSILYIDKQLIHEVTSPQAFAGIEKRGIGVFRPERTLATPDHNVPTKGQNLPIVEDLSRFQVDKLTENCNKFGVTLYGLGHASQGVVHVVGPETGTTLPGMTIVCGDSHTSTHGAFGSIAFGIGTSEVEQVLATQCLMQTKAKTLKIEINGKLAKGVTAKDVILYVIAQISAAGGTGYFVEYCGSAITSLSMEARMTICNMSIEMGARGGMIAPDETTFNYIKGREFAPKGAKWDEAVAYWKTLYSDSDAVFDKTLKYDAADIGPMITYGTNPGMGISVNKNIPSLDSIEESNKVTFNKALDYMGFHAGDSLIGKQVNWVFLGSCTNGRIEDLRQFAEFVKGKQKAANINALIVPGSKQVEKQAIAEGIDKVLAEAGFELREPGCSACLAMNEDKVPKGEYCVSTSNRNFEGRQGPGARTLLVSPLTAAAIAVSGKIVDVREMLN</sequence>
<feature type="chain" id="PRO_0000319813" description="3-isopropylmalate dehydratase large subunit">
    <location>
        <begin position="1"/>
        <end position="466"/>
    </location>
</feature>
<feature type="binding site" evidence="1">
    <location>
        <position position="346"/>
    </location>
    <ligand>
        <name>[4Fe-4S] cluster</name>
        <dbReference type="ChEBI" id="CHEBI:49883"/>
    </ligand>
</feature>
<feature type="binding site" evidence="1">
    <location>
        <position position="406"/>
    </location>
    <ligand>
        <name>[4Fe-4S] cluster</name>
        <dbReference type="ChEBI" id="CHEBI:49883"/>
    </ligand>
</feature>
<feature type="binding site" evidence="1">
    <location>
        <position position="409"/>
    </location>
    <ligand>
        <name>[4Fe-4S] cluster</name>
        <dbReference type="ChEBI" id="CHEBI:49883"/>
    </ligand>
</feature>
<name>LEUC_CYTH3</name>